<protein>
    <recommendedName>
        <fullName>Glyceraldehyde-3-phosphate dehydrogenase, cytosolic</fullName>
        <ecNumber>1.2.1.12</ecNumber>
    </recommendedName>
</protein>
<organism>
    <name type="scientific">Dianthus caryophyllus</name>
    <name type="common">Carnation</name>
    <name type="synonym">Clove pink</name>
    <dbReference type="NCBI Taxonomy" id="3570"/>
    <lineage>
        <taxon>Eukaryota</taxon>
        <taxon>Viridiplantae</taxon>
        <taxon>Streptophyta</taxon>
        <taxon>Embryophyta</taxon>
        <taxon>Tracheophyta</taxon>
        <taxon>Spermatophyta</taxon>
        <taxon>Magnoliopsida</taxon>
        <taxon>eudicotyledons</taxon>
        <taxon>Gunneridae</taxon>
        <taxon>Pentapetalae</taxon>
        <taxon>Caryophyllales</taxon>
        <taxon>Caryophyllaceae</taxon>
        <taxon>Caryophylleae</taxon>
        <taxon>Dianthus</taxon>
    </lineage>
</organism>
<feature type="chain" id="PRO_0000145599" description="Glyceraldehyde-3-phosphate dehydrogenase, cytosolic">
    <location>
        <begin position="1"/>
        <end position="338"/>
    </location>
</feature>
<feature type="active site" description="Nucleophile" evidence="2">
    <location>
        <position position="154"/>
    </location>
</feature>
<feature type="binding site" evidence="1">
    <location>
        <begin position="13"/>
        <end position="14"/>
    </location>
    <ligand>
        <name>NAD(+)</name>
        <dbReference type="ChEBI" id="CHEBI:57540"/>
    </ligand>
</feature>
<feature type="binding site" evidence="1">
    <location>
        <position position="35"/>
    </location>
    <ligand>
        <name>NAD(+)</name>
        <dbReference type="ChEBI" id="CHEBI:57540"/>
    </ligand>
</feature>
<feature type="binding site" evidence="1">
    <location>
        <position position="82"/>
    </location>
    <ligand>
        <name>NAD(+)</name>
        <dbReference type="ChEBI" id="CHEBI:57540"/>
    </ligand>
</feature>
<feature type="binding site" evidence="1">
    <location>
        <begin position="153"/>
        <end position="155"/>
    </location>
    <ligand>
        <name>D-glyceraldehyde 3-phosphate</name>
        <dbReference type="ChEBI" id="CHEBI:59776"/>
    </ligand>
</feature>
<feature type="binding site" evidence="1">
    <location>
        <position position="184"/>
    </location>
    <ligand>
        <name>D-glyceraldehyde 3-phosphate</name>
        <dbReference type="ChEBI" id="CHEBI:59776"/>
    </ligand>
</feature>
<feature type="binding site" evidence="1">
    <location>
        <begin position="213"/>
        <end position="214"/>
    </location>
    <ligand>
        <name>D-glyceraldehyde 3-phosphate</name>
        <dbReference type="ChEBI" id="CHEBI:59776"/>
    </ligand>
</feature>
<feature type="binding site" evidence="1">
    <location>
        <position position="236"/>
    </location>
    <ligand>
        <name>D-glyceraldehyde 3-phosphate</name>
        <dbReference type="ChEBI" id="CHEBI:59776"/>
    </ligand>
</feature>
<feature type="binding site" evidence="1">
    <location>
        <position position="318"/>
    </location>
    <ligand>
        <name>NAD(+)</name>
        <dbReference type="ChEBI" id="CHEBI:57540"/>
    </ligand>
</feature>
<feature type="site" description="Activates thiol group during catalysis" evidence="1">
    <location>
        <position position="181"/>
    </location>
</feature>
<proteinExistence type="inferred from homology"/>
<reference key="1">
    <citation type="journal article" date="1993" name="Mol. Biol. Evol.">
        <title>Molecular phylogenies in angiosperm evolution.</title>
        <authorList>
            <person name="Martin W."/>
            <person name="Lydiate D."/>
            <person name="Brinkmann H."/>
            <person name="Forkmann G."/>
            <person name="Saedler H."/>
            <person name="Cerff R."/>
        </authorList>
    </citation>
    <scope>NUCLEOTIDE SEQUENCE</scope>
</reference>
<dbReference type="EC" id="1.2.1.12"/>
<dbReference type="SMR" id="P34921"/>
<dbReference type="UniPathway" id="UPA00109">
    <property type="reaction ID" value="UER00184"/>
</dbReference>
<dbReference type="GO" id="GO:0005829">
    <property type="term" value="C:cytosol"/>
    <property type="evidence" value="ECO:0007669"/>
    <property type="project" value="TreeGrafter"/>
</dbReference>
<dbReference type="GO" id="GO:0004365">
    <property type="term" value="F:glyceraldehyde-3-phosphate dehydrogenase (NAD+) (phosphorylating) activity"/>
    <property type="evidence" value="ECO:0007669"/>
    <property type="project" value="UniProtKB-EC"/>
</dbReference>
<dbReference type="GO" id="GO:0051287">
    <property type="term" value="F:NAD binding"/>
    <property type="evidence" value="ECO:0007669"/>
    <property type="project" value="InterPro"/>
</dbReference>
<dbReference type="GO" id="GO:0050661">
    <property type="term" value="F:NADP binding"/>
    <property type="evidence" value="ECO:0007669"/>
    <property type="project" value="InterPro"/>
</dbReference>
<dbReference type="GO" id="GO:0006006">
    <property type="term" value="P:glucose metabolic process"/>
    <property type="evidence" value="ECO:0007669"/>
    <property type="project" value="InterPro"/>
</dbReference>
<dbReference type="GO" id="GO:0006096">
    <property type="term" value="P:glycolytic process"/>
    <property type="evidence" value="ECO:0007669"/>
    <property type="project" value="UniProtKB-UniPathway"/>
</dbReference>
<dbReference type="CDD" id="cd18126">
    <property type="entry name" value="GAPDH_I_C"/>
    <property type="match status" value="1"/>
</dbReference>
<dbReference type="CDD" id="cd05214">
    <property type="entry name" value="GAPDH_I_N"/>
    <property type="match status" value="1"/>
</dbReference>
<dbReference type="FunFam" id="3.30.360.10:FF:000001">
    <property type="entry name" value="Glyceraldehyde-3-phosphate dehydrogenase"/>
    <property type="match status" value="1"/>
</dbReference>
<dbReference type="FunFam" id="3.40.50.720:FF:000020">
    <property type="entry name" value="Glyceraldehyde-3-phosphate dehydrogenase"/>
    <property type="match status" value="1"/>
</dbReference>
<dbReference type="Gene3D" id="3.30.360.10">
    <property type="entry name" value="Dihydrodipicolinate Reductase, domain 2"/>
    <property type="match status" value="1"/>
</dbReference>
<dbReference type="Gene3D" id="3.40.50.720">
    <property type="entry name" value="NAD(P)-binding Rossmann-like Domain"/>
    <property type="match status" value="1"/>
</dbReference>
<dbReference type="InterPro" id="IPR020831">
    <property type="entry name" value="GlycerAld/Erythrose_P_DH"/>
</dbReference>
<dbReference type="InterPro" id="IPR020830">
    <property type="entry name" value="GlycerAld_3-P_DH_AS"/>
</dbReference>
<dbReference type="InterPro" id="IPR020829">
    <property type="entry name" value="GlycerAld_3-P_DH_cat"/>
</dbReference>
<dbReference type="InterPro" id="IPR020828">
    <property type="entry name" value="GlycerAld_3-P_DH_NAD(P)-bd"/>
</dbReference>
<dbReference type="InterPro" id="IPR006424">
    <property type="entry name" value="Glyceraldehyde-3-P_DH_1"/>
</dbReference>
<dbReference type="InterPro" id="IPR036291">
    <property type="entry name" value="NAD(P)-bd_dom_sf"/>
</dbReference>
<dbReference type="NCBIfam" id="TIGR01534">
    <property type="entry name" value="GAPDH-I"/>
    <property type="match status" value="1"/>
</dbReference>
<dbReference type="PANTHER" id="PTHR10836">
    <property type="entry name" value="GLYCERALDEHYDE 3-PHOSPHATE DEHYDROGENASE"/>
    <property type="match status" value="1"/>
</dbReference>
<dbReference type="PANTHER" id="PTHR10836:SF112">
    <property type="entry name" value="GLYCERALDEHYDE-3-PHOSPHATE DEHYDROGENASE GAPC1, CYTOSOLIC-RELATED"/>
    <property type="match status" value="1"/>
</dbReference>
<dbReference type="Pfam" id="PF02800">
    <property type="entry name" value="Gp_dh_C"/>
    <property type="match status" value="1"/>
</dbReference>
<dbReference type="Pfam" id="PF00044">
    <property type="entry name" value="Gp_dh_N"/>
    <property type="match status" value="1"/>
</dbReference>
<dbReference type="PIRSF" id="PIRSF000149">
    <property type="entry name" value="GAP_DH"/>
    <property type="match status" value="1"/>
</dbReference>
<dbReference type="PRINTS" id="PR00078">
    <property type="entry name" value="G3PDHDRGNASE"/>
</dbReference>
<dbReference type="SMART" id="SM00846">
    <property type="entry name" value="Gp_dh_N"/>
    <property type="match status" value="1"/>
</dbReference>
<dbReference type="SUPFAM" id="SSF55347">
    <property type="entry name" value="Glyceraldehyde-3-phosphate dehydrogenase-like, C-terminal domain"/>
    <property type="match status" value="1"/>
</dbReference>
<dbReference type="SUPFAM" id="SSF51735">
    <property type="entry name" value="NAD(P)-binding Rossmann-fold domains"/>
    <property type="match status" value="1"/>
</dbReference>
<dbReference type="PROSITE" id="PS00071">
    <property type="entry name" value="GAPDH"/>
    <property type="match status" value="1"/>
</dbReference>
<comment type="function">
    <text evidence="1">Key enzyme in glycolysis that catalyzes the first step of the pathway by converting D-glyceraldehyde 3-phosphate (G3P) into 3-phospho-D-glyceroyl phosphate. Essential for the maintenance of cellular ATP levels and carbohydrate metabolism (By similarity).</text>
</comment>
<comment type="catalytic activity">
    <reaction evidence="2">
        <text>D-glyceraldehyde 3-phosphate + phosphate + NAD(+) = (2R)-3-phospho-glyceroyl phosphate + NADH + H(+)</text>
        <dbReference type="Rhea" id="RHEA:10300"/>
        <dbReference type="ChEBI" id="CHEBI:15378"/>
        <dbReference type="ChEBI" id="CHEBI:43474"/>
        <dbReference type="ChEBI" id="CHEBI:57540"/>
        <dbReference type="ChEBI" id="CHEBI:57604"/>
        <dbReference type="ChEBI" id="CHEBI:57945"/>
        <dbReference type="ChEBI" id="CHEBI:59776"/>
        <dbReference type="EC" id="1.2.1.12"/>
    </reaction>
</comment>
<comment type="pathway">
    <text>Carbohydrate degradation; glycolysis; pyruvate from D-glyceraldehyde 3-phosphate: step 1/5.</text>
</comment>
<comment type="subunit">
    <text evidence="1">Homotetramer.</text>
</comment>
<comment type="subcellular location">
    <subcellularLocation>
        <location evidence="1">Cytoplasm</location>
    </subcellularLocation>
</comment>
<comment type="miscellaneous">
    <text>Plants contain two types of GAPDH: cytosolic forms which participate in glycolysis and chloroplast forms which participate in photosynthesis. All the forms are encoded by distinct genes.</text>
</comment>
<comment type="similarity">
    <text evidence="3">Belongs to the glyceraldehyde-3-phosphate dehydrogenase family.</text>
</comment>
<accession>P34921</accession>
<evidence type="ECO:0000250" key="1"/>
<evidence type="ECO:0000255" key="2">
    <source>
        <dbReference type="PROSITE-ProRule" id="PRU10009"/>
    </source>
</evidence>
<evidence type="ECO:0000305" key="3"/>
<gene>
    <name type="primary">GAPC</name>
</gene>
<name>G3PC_DIACA</name>
<sequence length="338" mass="36900">MAPIKIGINGFGRIGRLVARVILQREDCELVAVNDPFITTEYMTYMFKYDSVHGQWKHHDIKVKDEKTLLFGEKAVTVFGNRNPEEIPWGGTGADYVVESTGVFTDKDKAAAHLKGGAKKVIISAPSKDAPMFVVGVNEHEYKPELDIVSNASCTTNCLAPLAKVINDRFGIVEGLMTTVHSITATQKTVDGPSMKDWRGGRAASFNIIPSSTGAAKAVGKVLPSLNGKLTGMSFRVPTVDVSVVDLTVRIEKPATYEQVKAAIKEESEGKLKGILGYTEDDVVSTDFVGDNRSSIFDAKAGIALNDNFIKLVSWYDNEWGYSTRVVDLIAHIHKTCQ</sequence>
<keyword id="KW-0963">Cytoplasm</keyword>
<keyword id="KW-0324">Glycolysis</keyword>
<keyword id="KW-0520">NAD</keyword>
<keyword id="KW-0560">Oxidoreductase</keyword>